<name>CCSA_ORYSA</name>
<feature type="chain" id="PRO_0000201613" description="Cytochrome c biogenesis protein CcsA">
    <location>
        <begin position="1"/>
        <end position="321"/>
    </location>
</feature>
<feature type="transmembrane region" description="Helical" evidence="1">
    <location>
        <begin position="9"/>
        <end position="29"/>
    </location>
</feature>
<feature type="transmembrane region" description="Helical" evidence="1">
    <location>
        <begin position="44"/>
        <end position="64"/>
    </location>
</feature>
<feature type="transmembrane region" description="Helical" evidence="1">
    <location>
        <begin position="68"/>
        <end position="88"/>
    </location>
</feature>
<feature type="transmembrane region" description="Helical" evidence="1">
    <location>
        <begin position="143"/>
        <end position="163"/>
    </location>
</feature>
<feature type="transmembrane region" description="Helical" evidence="1">
    <location>
        <begin position="226"/>
        <end position="246"/>
    </location>
</feature>
<feature type="transmembrane region" description="Helical" evidence="1">
    <location>
        <begin position="260"/>
        <end position="274"/>
    </location>
</feature>
<feature type="transmembrane region" description="Helical" evidence="1">
    <location>
        <begin position="289"/>
        <end position="309"/>
    </location>
</feature>
<dbReference type="EMBL" id="AY522331">
    <property type="protein sequence ID" value="AAS46219.1"/>
    <property type="status" value="ALT_INIT"/>
    <property type="molecule type" value="Genomic_DNA"/>
</dbReference>
<dbReference type="SMR" id="P0C375"/>
<dbReference type="GO" id="GO:0009535">
    <property type="term" value="C:chloroplast thylakoid membrane"/>
    <property type="evidence" value="ECO:0007669"/>
    <property type="project" value="UniProtKB-SubCell"/>
</dbReference>
<dbReference type="GO" id="GO:0005886">
    <property type="term" value="C:plasma membrane"/>
    <property type="evidence" value="ECO:0007669"/>
    <property type="project" value="TreeGrafter"/>
</dbReference>
<dbReference type="GO" id="GO:0009536">
    <property type="term" value="C:plastid"/>
    <property type="evidence" value="ECO:0000305"/>
    <property type="project" value="Gramene"/>
</dbReference>
<dbReference type="GO" id="GO:0020037">
    <property type="term" value="F:heme binding"/>
    <property type="evidence" value="ECO:0007669"/>
    <property type="project" value="InterPro"/>
</dbReference>
<dbReference type="GO" id="GO:0017004">
    <property type="term" value="P:cytochrome complex assembly"/>
    <property type="evidence" value="ECO:0007669"/>
    <property type="project" value="UniProtKB-UniRule"/>
</dbReference>
<dbReference type="HAMAP" id="MF_01391">
    <property type="entry name" value="CytC_CcsA"/>
    <property type="match status" value="1"/>
</dbReference>
<dbReference type="InterPro" id="IPR002541">
    <property type="entry name" value="Cyt_c_assembly"/>
</dbReference>
<dbReference type="InterPro" id="IPR017562">
    <property type="entry name" value="Cyt_c_biogenesis_CcsA"/>
</dbReference>
<dbReference type="InterPro" id="IPR045062">
    <property type="entry name" value="Cyt_c_biogenesis_CcsA/CcmC"/>
</dbReference>
<dbReference type="NCBIfam" id="TIGR03144">
    <property type="entry name" value="cytochr_II_ccsB"/>
    <property type="match status" value="1"/>
</dbReference>
<dbReference type="PANTHER" id="PTHR30071:SF1">
    <property type="entry name" value="CYTOCHROME B_B6 PROTEIN-RELATED"/>
    <property type="match status" value="1"/>
</dbReference>
<dbReference type="PANTHER" id="PTHR30071">
    <property type="entry name" value="HEME EXPORTER PROTEIN C"/>
    <property type="match status" value="1"/>
</dbReference>
<dbReference type="Pfam" id="PF01578">
    <property type="entry name" value="Cytochrom_C_asm"/>
    <property type="match status" value="1"/>
</dbReference>
<gene>
    <name evidence="1" type="primary">ccsA</name>
    <name type="ORF">PA168</name>
</gene>
<evidence type="ECO:0000255" key="1">
    <source>
        <dbReference type="HAMAP-Rule" id="MF_01391"/>
    </source>
</evidence>
<evidence type="ECO:0000305" key="2"/>
<sequence length="321" mass="36702">MLFATLEHILTHISFSTISIVITIHLITLLVRELGGLRDSSEKGMIATFFCITGFLVSRWASSGHFPLSNLYESLIFLSWALYILHMIPKIQNSKNDLSTITTPSTILTQGFATSGLLTEMHQSTILVPALQSQWLMMHVSMMLLSYATLLCGSLLSAALLMIRFRKNLDFFSKKKKNVLSKTFFFNEIEYFYAKRSALKSTFFPLFPNYYKYQLIERLDSWSYRVISLGFTLLTIGILCGAVWANEAWGSYWNWDPKETWAFITWTIFAIYLHSRTNPNWKGTKSAFVASIGFLIIWICYFGINLLGIGLHSYGSFTLPI</sequence>
<proteinExistence type="inferred from homology"/>
<comment type="function">
    <text evidence="1">Required during biogenesis of c-type cytochromes (cytochrome c6 and cytochrome f) at the step of heme attachment.</text>
</comment>
<comment type="subunit">
    <text evidence="1">May interact with Ccs1.</text>
</comment>
<comment type="subcellular location">
    <subcellularLocation>
        <location evidence="1">Plastid</location>
        <location evidence="1">Chloroplast thylakoid membrane</location>
        <topology evidence="1">Multi-pass membrane protein</topology>
    </subcellularLocation>
</comment>
<comment type="similarity">
    <text evidence="1">Belongs to the CcmF/CycK/Ccl1/NrfE/CcsA family.</text>
</comment>
<comment type="sequence caution" evidence="2">
    <conflict type="erroneous initiation">
        <sequence resource="EMBL-CDS" id="AAS46219"/>
    </conflict>
    <text>Truncated N-terminus.</text>
</comment>
<reference key="1">
    <citation type="journal article" date="2004" name="Plant Physiol.">
        <title>A comparison of rice chloroplast genomes.</title>
        <authorList>
            <person name="Tang J."/>
            <person name="Xia H."/>
            <person name="Cao M."/>
            <person name="Zhang X."/>
            <person name="Zeng W."/>
            <person name="Hu S."/>
            <person name="Tong W."/>
            <person name="Wang J."/>
            <person name="Wang J."/>
            <person name="Yu J."/>
            <person name="Yang H."/>
            <person name="Zhu L."/>
        </authorList>
    </citation>
    <scope>NUCLEOTIDE SEQUENCE [LARGE SCALE GENOMIC DNA]</scope>
    <source>
        <strain>cv. PA64s</strain>
    </source>
</reference>
<organism>
    <name type="scientific">Oryza sativa</name>
    <name type="common">Rice</name>
    <dbReference type="NCBI Taxonomy" id="4530"/>
    <lineage>
        <taxon>Eukaryota</taxon>
        <taxon>Viridiplantae</taxon>
        <taxon>Streptophyta</taxon>
        <taxon>Embryophyta</taxon>
        <taxon>Tracheophyta</taxon>
        <taxon>Spermatophyta</taxon>
        <taxon>Magnoliopsida</taxon>
        <taxon>Liliopsida</taxon>
        <taxon>Poales</taxon>
        <taxon>Poaceae</taxon>
        <taxon>BOP clade</taxon>
        <taxon>Oryzoideae</taxon>
        <taxon>Oryzeae</taxon>
        <taxon>Oryzinae</taxon>
        <taxon>Oryza</taxon>
    </lineage>
</organism>
<protein>
    <recommendedName>
        <fullName evidence="1">Cytochrome c biogenesis protein CcsA</fullName>
    </recommendedName>
</protein>
<keyword id="KW-0150">Chloroplast</keyword>
<keyword id="KW-0201">Cytochrome c-type biogenesis</keyword>
<keyword id="KW-0472">Membrane</keyword>
<keyword id="KW-0934">Plastid</keyword>
<keyword id="KW-0793">Thylakoid</keyword>
<keyword id="KW-0812">Transmembrane</keyword>
<keyword id="KW-1133">Transmembrane helix</keyword>
<accession>P0C375</accession>
<accession>P12215</accession>
<accession>Q6QXR2</accession>
<accession>Q6QY38</accession>
<geneLocation type="chloroplast"/>